<feature type="chain" id="PRO_0000189243" description="4-diphosphocytidyl-2-C-methyl-D-erythritol kinase">
    <location>
        <begin position="1"/>
        <end position="291"/>
    </location>
</feature>
<feature type="active site" evidence="1">
    <location>
        <position position="10"/>
    </location>
</feature>
<feature type="active site" evidence="1">
    <location>
        <position position="141"/>
    </location>
</feature>
<feature type="binding site" evidence="1">
    <location>
        <begin position="99"/>
        <end position="109"/>
    </location>
    <ligand>
        <name>ATP</name>
        <dbReference type="ChEBI" id="CHEBI:30616"/>
    </ligand>
</feature>
<sequence>MTFTWPSPAKLNLFLYITGRRADGYHQLQTLFQFLNYGDEITITPRQDNEIRLLTPVEGVEHDNNLIVRAARLLQSYSDKHHAGIAHKGADIHINKRLPMGGGLGGGSSNAATVLIALNYHWQTGFTDETLAALGVSLGADVPIFVKGHAAFAEGIGEILHIAEPEEKWYLVAHPGIEISTLRVFTDPELKRDTPIRPLAALLKAPYLNDCESLVRKRFRKVEQLLSWLLEYAPSRLTGTGACVFGEFESEASARKVLNQAPEWLQGFVARGVNNSPLHNFRSGIPVLLSQ</sequence>
<accession>Q7N589</accession>
<evidence type="ECO:0000255" key="1">
    <source>
        <dbReference type="HAMAP-Rule" id="MF_00061"/>
    </source>
</evidence>
<proteinExistence type="inferred from homology"/>
<reference key="1">
    <citation type="journal article" date="2003" name="Nat. Biotechnol.">
        <title>The genome sequence of the entomopathogenic bacterium Photorhabdus luminescens.</title>
        <authorList>
            <person name="Duchaud E."/>
            <person name="Rusniok C."/>
            <person name="Frangeul L."/>
            <person name="Buchrieser C."/>
            <person name="Givaudan A."/>
            <person name="Taourit S."/>
            <person name="Bocs S."/>
            <person name="Boursaux-Eude C."/>
            <person name="Chandler M."/>
            <person name="Charles J.-F."/>
            <person name="Dassa E."/>
            <person name="Derose R."/>
            <person name="Derzelle S."/>
            <person name="Freyssinet G."/>
            <person name="Gaudriault S."/>
            <person name="Medigue C."/>
            <person name="Lanois A."/>
            <person name="Powell K."/>
            <person name="Siguier P."/>
            <person name="Vincent R."/>
            <person name="Wingate V."/>
            <person name="Zouine M."/>
            <person name="Glaser P."/>
            <person name="Boemare N."/>
            <person name="Danchin A."/>
            <person name="Kunst F."/>
        </authorList>
    </citation>
    <scope>NUCLEOTIDE SEQUENCE [LARGE SCALE GENOMIC DNA]</scope>
    <source>
        <strain>DSM 15139 / CIP 105565 / TT01</strain>
    </source>
</reference>
<name>ISPE_PHOLL</name>
<dbReference type="EC" id="2.7.1.148" evidence="1"/>
<dbReference type="EMBL" id="BX571866">
    <property type="protein sequence ID" value="CAE14360.1"/>
    <property type="molecule type" value="Genomic_DNA"/>
</dbReference>
<dbReference type="RefSeq" id="WP_011146322.1">
    <property type="nucleotide sequence ID" value="NC_005126.1"/>
</dbReference>
<dbReference type="SMR" id="Q7N589"/>
<dbReference type="STRING" id="243265.plu2067"/>
<dbReference type="GeneID" id="48848343"/>
<dbReference type="KEGG" id="plu:plu2067"/>
<dbReference type="eggNOG" id="COG1947">
    <property type="taxonomic scope" value="Bacteria"/>
</dbReference>
<dbReference type="HOGENOM" id="CLU_053057_3_0_6"/>
<dbReference type="OrthoDB" id="9809438at2"/>
<dbReference type="UniPathway" id="UPA00056">
    <property type="reaction ID" value="UER00094"/>
</dbReference>
<dbReference type="Proteomes" id="UP000002514">
    <property type="component" value="Chromosome"/>
</dbReference>
<dbReference type="GO" id="GO:0050515">
    <property type="term" value="F:4-(cytidine 5'-diphospho)-2-C-methyl-D-erythritol kinase activity"/>
    <property type="evidence" value="ECO:0007669"/>
    <property type="project" value="UniProtKB-UniRule"/>
</dbReference>
<dbReference type="GO" id="GO:0005524">
    <property type="term" value="F:ATP binding"/>
    <property type="evidence" value="ECO:0007669"/>
    <property type="project" value="UniProtKB-UniRule"/>
</dbReference>
<dbReference type="GO" id="GO:0019288">
    <property type="term" value="P:isopentenyl diphosphate biosynthetic process, methylerythritol 4-phosphate pathway"/>
    <property type="evidence" value="ECO:0007669"/>
    <property type="project" value="UniProtKB-UniRule"/>
</dbReference>
<dbReference type="GO" id="GO:0016114">
    <property type="term" value="P:terpenoid biosynthetic process"/>
    <property type="evidence" value="ECO:0007669"/>
    <property type="project" value="InterPro"/>
</dbReference>
<dbReference type="FunFam" id="3.30.230.10:FF:000022">
    <property type="entry name" value="4-diphosphocytidyl-2-C-methyl-D-erythritol kinase"/>
    <property type="match status" value="1"/>
</dbReference>
<dbReference type="FunFam" id="3.30.70.890:FF:000004">
    <property type="entry name" value="4-diphosphocytidyl-2-C-methyl-D-erythritol kinase"/>
    <property type="match status" value="1"/>
</dbReference>
<dbReference type="Gene3D" id="3.30.230.10">
    <property type="match status" value="1"/>
</dbReference>
<dbReference type="Gene3D" id="3.30.70.890">
    <property type="entry name" value="GHMP kinase, C-terminal domain"/>
    <property type="match status" value="1"/>
</dbReference>
<dbReference type="HAMAP" id="MF_00061">
    <property type="entry name" value="IspE"/>
    <property type="match status" value="1"/>
</dbReference>
<dbReference type="InterPro" id="IPR013750">
    <property type="entry name" value="GHMP_kinase_C_dom"/>
</dbReference>
<dbReference type="InterPro" id="IPR036554">
    <property type="entry name" value="GHMP_kinase_C_sf"/>
</dbReference>
<dbReference type="InterPro" id="IPR006204">
    <property type="entry name" value="GHMP_kinase_N_dom"/>
</dbReference>
<dbReference type="InterPro" id="IPR004424">
    <property type="entry name" value="IspE"/>
</dbReference>
<dbReference type="InterPro" id="IPR020568">
    <property type="entry name" value="Ribosomal_Su5_D2-typ_SF"/>
</dbReference>
<dbReference type="InterPro" id="IPR014721">
    <property type="entry name" value="Ribsml_uS5_D2-typ_fold_subgr"/>
</dbReference>
<dbReference type="NCBIfam" id="TIGR00154">
    <property type="entry name" value="ispE"/>
    <property type="match status" value="1"/>
</dbReference>
<dbReference type="PANTHER" id="PTHR43527">
    <property type="entry name" value="4-DIPHOSPHOCYTIDYL-2-C-METHYL-D-ERYTHRITOL KINASE, CHLOROPLASTIC"/>
    <property type="match status" value="1"/>
</dbReference>
<dbReference type="PANTHER" id="PTHR43527:SF2">
    <property type="entry name" value="4-DIPHOSPHOCYTIDYL-2-C-METHYL-D-ERYTHRITOL KINASE, CHLOROPLASTIC"/>
    <property type="match status" value="1"/>
</dbReference>
<dbReference type="Pfam" id="PF08544">
    <property type="entry name" value="GHMP_kinases_C"/>
    <property type="match status" value="1"/>
</dbReference>
<dbReference type="Pfam" id="PF00288">
    <property type="entry name" value="GHMP_kinases_N"/>
    <property type="match status" value="1"/>
</dbReference>
<dbReference type="PIRSF" id="PIRSF010376">
    <property type="entry name" value="IspE"/>
    <property type="match status" value="1"/>
</dbReference>
<dbReference type="SUPFAM" id="SSF55060">
    <property type="entry name" value="GHMP Kinase, C-terminal domain"/>
    <property type="match status" value="1"/>
</dbReference>
<dbReference type="SUPFAM" id="SSF54211">
    <property type="entry name" value="Ribosomal protein S5 domain 2-like"/>
    <property type="match status" value="1"/>
</dbReference>
<protein>
    <recommendedName>
        <fullName evidence="1">4-diphosphocytidyl-2-C-methyl-D-erythritol kinase</fullName>
        <shortName evidence="1">CMK</shortName>
        <ecNumber evidence="1">2.7.1.148</ecNumber>
    </recommendedName>
    <alternativeName>
        <fullName evidence="1">4-(cytidine-5'-diphospho)-2-C-methyl-D-erythritol kinase</fullName>
    </alternativeName>
</protein>
<organism>
    <name type="scientific">Photorhabdus laumondii subsp. laumondii (strain DSM 15139 / CIP 105565 / TT01)</name>
    <name type="common">Photorhabdus luminescens subsp. laumondii</name>
    <dbReference type="NCBI Taxonomy" id="243265"/>
    <lineage>
        <taxon>Bacteria</taxon>
        <taxon>Pseudomonadati</taxon>
        <taxon>Pseudomonadota</taxon>
        <taxon>Gammaproteobacteria</taxon>
        <taxon>Enterobacterales</taxon>
        <taxon>Morganellaceae</taxon>
        <taxon>Photorhabdus</taxon>
    </lineage>
</organism>
<comment type="function">
    <text evidence="1">Catalyzes the phosphorylation of the position 2 hydroxy group of 4-diphosphocytidyl-2C-methyl-D-erythritol.</text>
</comment>
<comment type="catalytic activity">
    <reaction evidence="1">
        <text>4-CDP-2-C-methyl-D-erythritol + ATP = 4-CDP-2-C-methyl-D-erythritol 2-phosphate + ADP + H(+)</text>
        <dbReference type="Rhea" id="RHEA:18437"/>
        <dbReference type="ChEBI" id="CHEBI:15378"/>
        <dbReference type="ChEBI" id="CHEBI:30616"/>
        <dbReference type="ChEBI" id="CHEBI:57823"/>
        <dbReference type="ChEBI" id="CHEBI:57919"/>
        <dbReference type="ChEBI" id="CHEBI:456216"/>
        <dbReference type="EC" id="2.7.1.148"/>
    </reaction>
</comment>
<comment type="pathway">
    <text evidence="1">Isoprenoid biosynthesis; isopentenyl diphosphate biosynthesis via DXP pathway; isopentenyl diphosphate from 1-deoxy-D-xylulose 5-phosphate: step 3/6.</text>
</comment>
<comment type="subunit">
    <text evidence="1">Homodimer.</text>
</comment>
<comment type="similarity">
    <text evidence="1">Belongs to the GHMP kinase family. IspE subfamily.</text>
</comment>
<keyword id="KW-0067">ATP-binding</keyword>
<keyword id="KW-0414">Isoprene biosynthesis</keyword>
<keyword id="KW-0418">Kinase</keyword>
<keyword id="KW-0547">Nucleotide-binding</keyword>
<keyword id="KW-1185">Reference proteome</keyword>
<keyword id="KW-0808">Transferase</keyword>
<gene>
    <name evidence="1" type="primary">ispE</name>
    <name type="ordered locus">plu2067</name>
</gene>